<keyword id="KW-0963">Cytoplasm</keyword>
<keyword id="KW-0256">Endoplasmic reticulum</keyword>
<keyword id="KW-0472">Membrane</keyword>
<keyword id="KW-0509">mRNA transport</keyword>
<keyword id="KW-0539">Nucleus</keyword>
<keyword id="KW-0653">Protein transport</keyword>
<keyword id="KW-1185">Reference proteome</keyword>
<keyword id="KW-0811">Translocation</keyword>
<keyword id="KW-0813">Transport</keyword>
<organism>
    <name type="scientific">Emericella nidulans (strain FGSC A4 / ATCC 38163 / CBS 112.46 / NRRL 194 / M139)</name>
    <name type="common">Aspergillus nidulans</name>
    <dbReference type="NCBI Taxonomy" id="227321"/>
    <lineage>
        <taxon>Eukaryota</taxon>
        <taxon>Fungi</taxon>
        <taxon>Dikarya</taxon>
        <taxon>Ascomycota</taxon>
        <taxon>Pezizomycotina</taxon>
        <taxon>Eurotiomycetes</taxon>
        <taxon>Eurotiomycetidae</taxon>
        <taxon>Eurotiales</taxon>
        <taxon>Aspergillaceae</taxon>
        <taxon>Aspergillus</taxon>
        <taxon>Aspergillus subgen. Nidulantes</taxon>
    </lineage>
</organism>
<proteinExistence type="inferred from homology"/>
<protein>
    <recommendedName>
        <fullName>Nuclear protein localization protein 4</fullName>
    </recommendedName>
</protein>
<feature type="chain" id="PRO_0000339445" description="Nuclear protein localization protein 4">
    <location>
        <begin position="1"/>
        <end position="652"/>
    </location>
</feature>
<feature type="domain" description="MPN" evidence="2">
    <location>
        <begin position="268"/>
        <end position="405"/>
    </location>
</feature>
<feature type="region of interest" description="Disordered" evidence="3">
    <location>
        <begin position="95"/>
        <end position="127"/>
    </location>
</feature>
<feature type="region of interest" description="Disordered" evidence="3">
    <location>
        <begin position="604"/>
        <end position="652"/>
    </location>
</feature>
<feature type="compositionally biased region" description="Low complexity" evidence="3">
    <location>
        <begin position="97"/>
        <end position="108"/>
    </location>
</feature>
<feature type="compositionally biased region" description="Basic and acidic residues" evidence="3">
    <location>
        <begin position="630"/>
        <end position="643"/>
    </location>
</feature>
<dbReference type="EMBL" id="AACD01000006">
    <property type="protein sequence ID" value="EAA65701.1"/>
    <property type="status" value="ALT_SEQ"/>
    <property type="molecule type" value="Genomic_DNA"/>
</dbReference>
<dbReference type="EMBL" id="BN001308">
    <property type="protein sequence ID" value="CBF89782.1"/>
    <property type="molecule type" value="Genomic_DNA"/>
</dbReference>
<dbReference type="RefSeq" id="XP_657899.1">
    <property type="nucleotide sequence ID" value="XM_652807.1"/>
</dbReference>
<dbReference type="SMR" id="Q5BGN5"/>
<dbReference type="FunCoup" id="Q5BGN5">
    <property type="interactions" value="943"/>
</dbReference>
<dbReference type="STRING" id="227321.Q5BGN5"/>
<dbReference type="EnsemblFungi" id="CBF89782">
    <property type="protein sequence ID" value="CBF89782"/>
    <property type="gene ID" value="ANIA_00295"/>
</dbReference>
<dbReference type="eggNOG" id="KOG2834">
    <property type="taxonomic scope" value="Eukaryota"/>
</dbReference>
<dbReference type="HOGENOM" id="CLU_017172_0_0_1"/>
<dbReference type="InParanoid" id="Q5BGN5"/>
<dbReference type="OMA" id="KWSRTGR"/>
<dbReference type="OrthoDB" id="10251089at2759"/>
<dbReference type="Proteomes" id="UP000000560">
    <property type="component" value="Chromosome VIII"/>
</dbReference>
<dbReference type="GO" id="GO:0005789">
    <property type="term" value="C:endoplasmic reticulum membrane"/>
    <property type="evidence" value="ECO:0007669"/>
    <property type="project" value="UniProtKB-SubCell"/>
</dbReference>
<dbReference type="GO" id="GO:0031965">
    <property type="term" value="C:nuclear membrane"/>
    <property type="evidence" value="ECO:0007669"/>
    <property type="project" value="UniProtKB-SubCell"/>
</dbReference>
<dbReference type="GO" id="GO:0005634">
    <property type="term" value="C:nucleus"/>
    <property type="evidence" value="ECO:0000318"/>
    <property type="project" value="GO_Central"/>
</dbReference>
<dbReference type="GO" id="GO:0048471">
    <property type="term" value="C:perinuclear region of cytoplasm"/>
    <property type="evidence" value="ECO:0007669"/>
    <property type="project" value="UniProtKB-SubCell"/>
</dbReference>
<dbReference type="GO" id="GO:0043130">
    <property type="term" value="F:ubiquitin binding"/>
    <property type="evidence" value="ECO:0000318"/>
    <property type="project" value="GO_Central"/>
</dbReference>
<dbReference type="GO" id="GO:0031625">
    <property type="term" value="F:ubiquitin protein ligase binding"/>
    <property type="evidence" value="ECO:0000318"/>
    <property type="project" value="GO_Central"/>
</dbReference>
<dbReference type="GO" id="GO:0051028">
    <property type="term" value="P:mRNA transport"/>
    <property type="evidence" value="ECO:0007669"/>
    <property type="project" value="UniProtKB-KW"/>
</dbReference>
<dbReference type="GO" id="GO:0015031">
    <property type="term" value="P:protein transport"/>
    <property type="evidence" value="ECO:0007669"/>
    <property type="project" value="UniProtKB-KW"/>
</dbReference>
<dbReference type="GO" id="GO:0006511">
    <property type="term" value="P:ubiquitin-dependent protein catabolic process"/>
    <property type="evidence" value="ECO:0000318"/>
    <property type="project" value="GO_Central"/>
</dbReference>
<dbReference type="CDD" id="cd08061">
    <property type="entry name" value="MPN_NPL4"/>
    <property type="match status" value="1"/>
</dbReference>
<dbReference type="Gene3D" id="3.10.20.90">
    <property type="entry name" value="Phosphatidylinositol 3-kinase Catalytic Subunit, Chain A, domain 1"/>
    <property type="match status" value="1"/>
</dbReference>
<dbReference type="InterPro" id="IPR037518">
    <property type="entry name" value="MPN"/>
</dbReference>
<dbReference type="InterPro" id="IPR016563">
    <property type="entry name" value="Npl4"/>
</dbReference>
<dbReference type="InterPro" id="IPR007717">
    <property type="entry name" value="NPL4_C"/>
</dbReference>
<dbReference type="InterPro" id="IPR007716">
    <property type="entry name" value="NPL4_Zn-bd_put"/>
</dbReference>
<dbReference type="InterPro" id="IPR029071">
    <property type="entry name" value="Ubiquitin-like_domsf"/>
</dbReference>
<dbReference type="PANTHER" id="PTHR12710">
    <property type="entry name" value="NUCLEAR PROTEIN LOCALIZATION 4"/>
    <property type="match status" value="1"/>
</dbReference>
<dbReference type="PANTHER" id="PTHR12710:SF0">
    <property type="entry name" value="NUCLEAR PROTEIN LOCALIZATION PROTEIN 4 HOMOLOG"/>
    <property type="match status" value="1"/>
</dbReference>
<dbReference type="Pfam" id="PF05021">
    <property type="entry name" value="NPL4"/>
    <property type="match status" value="1"/>
</dbReference>
<dbReference type="Pfam" id="PF05020">
    <property type="entry name" value="zf-NPL4"/>
    <property type="match status" value="1"/>
</dbReference>
<dbReference type="PIRSF" id="PIRSF010052">
    <property type="entry name" value="Polyub_prc_Npl4"/>
    <property type="match status" value="1"/>
</dbReference>
<dbReference type="SUPFAM" id="SSF54236">
    <property type="entry name" value="Ubiquitin-like"/>
    <property type="match status" value="1"/>
</dbReference>
<dbReference type="PROSITE" id="PS50249">
    <property type="entry name" value="MPN"/>
    <property type="match status" value="1"/>
</dbReference>
<comment type="function">
    <text evidence="1">Involved in the import of nuclear-targeted proteins into the nucleus and the export of poly(A) RNA out of the nucleus. Has a role in the endoplasmic reticulum-associated degradation (ERAD) pathway (By similarity).</text>
</comment>
<comment type="subcellular location">
    <subcellularLocation>
        <location evidence="1">Cytoplasm</location>
        <location evidence="1">Perinuclear region</location>
    </subcellularLocation>
    <subcellularLocation>
        <location evidence="1">Endoplasmic reticulum membrane</location>
        <topology evidence="1">Peripheral membrane protein</topology>
        <orientation evidence="1">Cytoplasmic side</orientation>
    </subcellularLocation>
    <subcellularLocation>
        <location evidence="1">Nucleus membrane</location>
        <topology evidence="1">Peripheral membrane protein</topology>
        <orientation evidence="1">Cytoplasmic side</orientation>
    </subcellularLocation>
    <text evidence="1">Localizes mainly at the nuclear periphery and the endoplasmic reticulum membrane.</text>
</comment>
<comment type="similarity">
    <text evidence="4">Belongs to the NPL4 family.</text>
</comment>
<comment type="sequence caution" evidence="4">
    <conflict type="erroneous gene model prediction">
        <sequence resource="EMBL-CDS" id="EAA65701"/>
    </conflict>
</comment>
<gene>
    <name type="primary">npl4</name>
    <name type="ORF">AN0295</name>
</gene>
<accession>Q5BGN5</accession>
<accession>C8VUA1</accession>
<name>NPL4_EMENI</name>
<reference key="1">
    <citation type="journal article" date="2005" name="Nature">
        <title>Sequencing of Aspergillus nidulans and comparative analysis with A. fumigatus and A. oryzae.</title>
        <authorList>
            <person name="Galagan J.E."/>
            <person name="Calvo S.E."/>
            <person name="Cuomo C."/>
            <person name="Ma L.-J."/>
            <person name="Wortman J.R."/>
            <person name="Batzoglou S."/>
            <person name="Lee S.-I."/>
            <person name="Bastuerkmen M."/>
            <person name="Spevak C.C."/>
            <person name="Clutterbuck J."/>
            <person name="Kapitonov V."/>
            <person name="Jurka J."/>
            <person name="Scazzocchio C."/>
            <person name="Farman M.L."/>
            <person name="Butler J."/>
            <person name="Purcell S."/>
            <person name="Harris S."/>
            <person name="Braus G.H."/>
            <person name="Draht O."/>
            <person name="Busch S."/>
            <person name="D'Enfert C."/>
            <person name="Bouchier C."/>
            <person name="Goldman G.H."/>
            <person name="Bell-Pedersen D."/>
            <person name="Griffiths-Jones S."/>
            <person name="Doonan J.H."/>
            <person name="Yu J."/>
            <person name="Vienken K."/>
            <person name="Pain A."/>
            <person name="Freitag M."/>
            <person name="Selker E.U."/>
            <person name="Archer D.B."/>
            <person name="Penalva M.A."/>
            <person name="Oakley B.R."/>
            <person name="Momany M."/>
            <person name="Tanaka T."/>
            <person name="Kumagai T."/>
            <person name="Asai K."/>
            <person name="Machida M."/>
            <person name="Nierman W.C."/>
            <person name="Denning D.W."/>
            <person name="Caddick M.X."/>
            <person name="Hynes M."/>
            <person name="Paoletti M."/>
            <person name="Fischer R."/>
            <person name="Miller B.L."/>
            <person name="Dyer P.S."/>
            <person name="Sachs M.S."/>
            <person name="Osmani S.A."/>
            <person name="Birren B.W."/>
        </authorList>
    </citation>
    <scope>NUCLEOTIDE SEQUENCE [LARGE SCALE GENOMIC DNA]</scope>
    <source>
        <strain>FGSC A4 / ATCC 38163 / CBS 112.46 / NRRL 194 / M139</strain>
    </source>
</reference>
<reference key="2">
    <citation type="journal article" date="2009" name="Fungal Genet. Biol.">
        <title>The 2008 update of the Aspergillus nidulans genome annotation: a community effort.</title>
        <authorList>
            <person name="Wortman J.R."/>
            <person name="Gilsenan J.M."/>
            <person name="Joardar V."/>
            <person name="Deegan J."/>
            <person name="Clutterbuck J."/>
            <person name="Andersen M.R."/>
            <person name="Archer D."/>
            <person name="Bencina M."/>
            <person name="Braus G."/>
            <person name="Coutinho P."/>
            <person name="von Dohren H."/>
            <person name="Doonan J."/>
            <person name="Driessen A.J."/>
            <person name="Durek P."/>
            <person name="Espeso E."/>
            <person name="Fekete E."/>
            <person name="Flipphi M."/>
            <person name="Estrada C.G."/>
            <person name="Geysens S."/>
            <person name="Goldman G."/>
            <person name="de Groot P.W."/>
            <person name="Hansen K."/>
            <person name="Harris S.D."/>
            <person name="Heinekamp T."/>
            <person name="Helmstaedt K."/>
            <person name="Henrissat B."/>
            <person name="Hofmann G."/>
            <person name="Homan T."/>
            <person name="Horio T."/>
            <person name="Horiuchi H."/>
            <person name="James S."/>
            <person name="Jones M."/>
            <person name="Karaffa L."/>
            <person name="Karanyi Z."/>
            <person name="Kato M."/>
            <person name="Keller N."/>
            <person name="Kelly D.E."/>
            <person name="Kiel J.A."/>
            <person name="Kim J.M."/>
            <person name="van der Klei I.J."/>
            <person name="Klis F.M."/>
            <person name="Kovalchuk A."/>
            <person name="Krasevec N."/>
            <person name="Kubicek C.P."/>
            <person name="Liu B."/>
            <person name="Maccabe A."/>
            <person name="Meyer V."/>
            <person name="Mirabito P."/>
            <person name="Miskei M."/>
            <person name="Mos M."/>
            <person name="Mullins J."/>
            <person name="Nelson D.R."/>
            <person name="Nielsen J."/>
            <person name="Oakley B.R."/>
            <person name="Osmani S.A."/>
            <person name="Pakula T."/>
            <person name="Paszewski A."/>
            <person name="Paulsen I."/>
            <person name="Pilsyk S."/>
            <person name="Pocsi I."/>
            <person name="Punt P.J."/>
            <person name="Ram A.F."/>
            <person name="Ren Q."/>
            <person name="Robellet X."/>
            <person name="Robson G."/>
            <person name="Seiboth B."/>
            <person name="van Solingen P."/>
            <person name="Specht T."/>
            <person name="Sun J."/>
            <person name="Taheri-Talesh N."/>
            <person name="Takeshita N."/>
            <person name="Ussery D."/>
            <person name="vanKuyk P.A."/>
            <person name="Visser H."/>
            <person name="van de Vondervoort P.J."/>
            <person name="de Vries R.P."/>
            <person name="Walton J."/>
            <person name="Xiang X."/>
            <person name="Xiong Y."/>
            <person name="Zeng A.P."/>
            <person name="Brandt B.W."/>
            <person name="Cornell M.J."/>
            <person name="van den Hondel C.A."/>
            <person name="Visser J."/>
            <person name="Oliver S.G."/>
            <person name="Turner G."/>
        </authorList>
    </citation>
    <scope>GENOME REANNOTATION</scope>
    <source>
        <strain>FGSC A4 / ATCC 38163 / CBS 112.46 / NRRL 194 / M139</strain>
    </source>
</reference>
<sequence>MTSRTIILRFESRNGQFRLNVSPQDMFPSLETKILEHLPPDTEPSSIKLSNKPIGAAGDERFLNTLDGVSFEQVGLRSGHGDKLYIGYQSKQDLQDGASNGTAAGSSARRLNGAPINQEITPTSRAQADRVASVTVKNPWDAVRQSALDDRLEKKDGKIHRSRDNKMCKHSAKGMCDYCMPLEPYDPKYLAEKKIKHLSFHSYLRKINAATNKPELKSSFMPPLSEPYYRVRTDCPSGHPPWPEGICTKCQPSAISLQPQEYRMVDHVEFSTPDLINSLLDFWRKSGTQRLGYLYGTYEEYDEVPLGIKAVVQAIYEPPQVDEVDGVTLHEWENEKDVDEIARLCGLEKVGVIFTDLLDAGRGDGSVLCKRHIDSYYLSSLEIAFASRLQMQQPKATRWSRTGYFGSNFVTCVLSGDEEGAITISSYQASVAAVEMIRADIIEPSAEPSVMLVQSEDDDTNKSRYIPEVFYRKINEYGVSAQVNAKPAFPVEYLLVTLTHGFPTESKPLFIDSTYPIENREVIGEGQEFHSLARKLVSHGDPQKAIRAVSDFHLLCFLRTFSTFSKEEEALLCRVATTQNPTDGLQLINTPGWATLVTILQDSGERPPKRPWLDPSHPVPQPGKRYSPSSRHESPRSESEQLAKRFKGASLR</sequence>
<evidence type="ECO:0000250" key="1"/>
<evidence type="ECO:0000255" key="2">
    <source>
        <dbReference type="PROSITE-ProRule" id="PRU01182"/>
    </source>
</evidence>
<evidence type="ECO:0000256" key="3">
    <source>
        <dbReference type="SAM" id="MobiDB-lite"/>
    </source>
</evidence>
<evidence type="ECO:0000305" key="4"/>